<keyword id="KW-0975">Bacterial flagellum</keyword>
<keyword id="KW-0175">Coiled coil</keyword>
<keyword id="KW-0964">Secreted</keyword>
<reference key="1">
    <citation type="journal article" date="1998" name="J. Bacteriol.">
        <title>Differential regulation of multiple flagellins in Vibrio cholerae.</title>
        <authorList>
            <person name="Klose K.E."/>
            <person name="Mekalanos J.J."/>
        </authorList>
    </citation>
    <scope>NUCLEOTIDE SEQUENCE [GENOMIC DNA]</scope>
</reference>
<reference key="2">
    <citation type="submission" date="2007-03" db="EMBL/GenBank/DDBJ databases">
        <authorList>
            <person name="Heidelberg J."/>
        </authorList>
    </citation>
    <scope>NUCLEOTIDE SEQUENCE [LARGE SCALE GENOMIC DNA]</scope>
    <source>
        <strain>ATCC 39541 / Classical Ogawa 395 / O395</strain>
    </source>
</reference>
<reference key="3">
    <citation type="journal article" date="2008" name="PLoS ONE">
        <title>A recalibrated molecular clock and independent origins for the cholera pandemic clones.</title>
        <authorList>
            <person name="Feng L."/>
            <person name="Reeves P.R."/>
            <person name="Lan R."/>
            <person name="Ren Y."/>
            <person name="Gao C."/>
            <person name="Zhou Z."/>
            <person name="Ren Y."/>
            <person name="Cheng J."/>
            <person name="Wang W."/>
            <person name="Wang J."/>
            <person name="Qian W."/>
            <person name="Li D."/>
            <person name="Wang L."/>
        </authorList>
    </citation>
    <scope>NUCLEOTIDE SEQUENCE [LARGE SCALE GENOMIC DNA]</scope>
    <source>
        <strain>ATCC 39541 / Classical Ogawa 395 / O395</strain>
    </source>
</reference>
<feature type="chain" id="PRO_0000321847" description="Flagellin B">
    <location>
        <begin position="1"/>
        <end position="376"/>
    </location>
</feature>
<feature type="coiled-coil region" evidence="1">
    <location>
        <begin position="103"/>
        <end position="129"/>
    </location>
</feature>
<comment type="function">
    <text>Flagellin is the subunit protein which polymerizes to form the filaments of bacterial flagella. FlaB is not essential for flagellar synthesis and motility.</text>
</comment>
<comment type="subunit">
    <text>Heteromer of multiple flagellin subunits including FlaA, FlaB, FlaC, FlaD and FlaE.</text>
</comment>
<comment type="subcellular location">
    <subcellularLocation>
        <location>Secreted</location>
    </subcellularLocation>
    <subcellularLocation>
        <location>Bacterial flagellum</location>
    </subcellularLocation>
</comment>
<comment type="miscellaneous">
    <text>V.cholerae is able to differentially regulate the flagellins within the flagellum maybe to produce flagella which are particularly suited for motility within a given environment.</text>
</comment>
<comment type="similarity">
    <text evidence="2">Belongs to the bacterial flagellin family.</text>
</comment>
<sequence length="376" mass="39517">MAINVNTNVSAMTAQRYLNGAADGMQKSMERLSSGYKINSARDDAAGLQISNRLTSQSRGLDMAVKNANDGISIAQTAEGAMNETTNILQRMRDLALQSSNGSNSSSERRAIQEEVSALNDELNRIAETTSFGGNKLLNGSFGSKSFQIGADSGEAVMLSMGSMRSDTQAMGGKSYRAQEGKAADWRVGAATDLTLSYTNKQGEAREVTINAKQGDDLEELATYINGQTEDVKASVGEDGKLQLFASSQKVNGDVTIGGGLGGEIGFDAGRNVTVADVNVSTVAGSQEAVSILDGALKAVDSQRASLGAFQNRFGHAISNLDNVNENVNASRSRIRDTDYARETTAMTKAQILQQASTSVLAQAKQSPSAALSLLG</sequence>
<dbReference type="EMBL" id="AF007122">
    <property type="protein sequence ID" value="AAC01557.1"/>
    <property type="molecule type" value="Genomic_DNA"/>
</dbReference>
<dbReference type="EMBL" id="CP000627">
    <property type="protein sequence ID" value="ABQ21259.1"/>
    <property type="molecule type" value="Genomic_DNA"/>
</dbReference>
<dbReference type="EMBL" id="CP001235">
    <property type="protein sequence ID" value="ACP10248.1"/>
    <property type="molecule type" value="Genomic_DNA"/>
</dbReference>
<dbReference type="RefSeq" id="WP_000996996.1">
    <property type="nucleotide sequence ID" value="NZ_JAACZH010000001.1"/>
</dbReference>
<dbReference type="SMR" id="A5F6C4"/>
<dbReference type="KEGG" id="vco:VC0395_A1726"/>
<dbReference type="KEGG" id="vcr:VC395_2256"/>
<dbReference type="PATRIC" id="fig|345073.21.peg.2180"/>
<dbReference type="eggNOG" id="COG1344">
    <property type="taxonomic scope" value="Bacteria"/>
</dbReference>
<dbReference type="HOGENOM" id="CLU_011142_7_2_6"/>
<dbReference type="OrthoDB" id="9796789at2"/>
<dbReference type="Proteomes" id="UP000000249">
    <property type="component" value="Chromosome 2"/>
</dbReference>
<dbReference type="GO" id="GO:0009288">
    <property type="term" value="C:bacterial-type flagellum"/>
    <property type="evidence" value="ECO:0007669"/>
    <property type="project" value="UniProtKB-SubCell"/>
</dbReference>
<dbReference type="GO" id="GO:0005576">
    <property type="term" value="C:extracellular region"/>
    <property type="evidence" value="ECO:0007669"/>
    <property type="project" value="UniProtKB-SubCell"/>
</dbReference>
<dbReference type="GO" id="GO:0005198">
    <property type="term" value="F:structural molecule activity"/>
    <property type="evidence" value="ECO:0007669"/>
    <property type="project" value="InterPro"/>
</dbReference>
<dbReference type="FunFam" id="1.20.1330.10:FF:000002">
    <property type="entry name" value="Flagellin"/>
    <property type="match status" value="1"/>
</dbReference>
<dbReference type="Gene3D" id="3.30.70.2120">
    <property type="match status" value="1"/>
</dbReference>
<dbReference type="Gene3D" id="1.20.1330.10">
    <property type="entry name" value="f41 fragment of flagellin, N-terminal domain"/>
    <property type="match status" value="1"/>
</dbReference>
<dbReference type="Gene3D" id="6.10.10.10">
    <property type="entry name" value="Flagellar export chaperone, C-terminal domain"/>
    <property type="match status" value="1"/>
</dbReference>
<dbReference type="InterPro" id="IPR001492">
    <property type="entry name" value="Flagellin"/>
</dbReference>
<dbReference type="InterPro" id="IPR046358">
    <property type="entry name" value="Flagellin_C"/>
</dbReference>
<dbReference type="InterPro" id="IPR042187">
    <property type="entry name" value="Flagellin_C_sub2"/>
</dbReference>
<dbReference type="InterPro" id="IPR010810">
    <property type="entry name" value="Flagellin_hook_IN_motif"/>
</dbReference>
<dbReference type="InterPro" id="IPR001029">
    <property type="entry name" value="Flagellin_N"/>
</dbReference>
<dbReference type="NCBIfam" id="NF006466">
    <property type="entry name" value="PRK08869.1-1"/>
    <property type="match status" value="1"/>
</dbReference>
<dbReference type="NCBIfam" id="NF006468">
    <property type="entry name" value="PRK08869.1-3"/>
    <property type="match status" value="1"/>
</dbReference>
<dbReference type="PANTHER" id="PTHR42792">
    <property type="entry name" value="FLAGELLIN"/>
    <property type="match status" value="1"/>
</dbReference>
<dbReference type="PANTHER" id="PTHR42792:SF2">
    <property type="entry name" value="FLAGELLIN"/>
    <property type="match status" value="1"/>
</dbReference>
<dbReference type="Pfam" id="PF00700">
    <property type="entry name" value="Flagellin_C"/>
    <property type="match status" value="1"/>
</dbReference>
<dbReference type="Pfam" id="PF07196">
    <property type="entry name" value="Flagellin_IN"/>
    <property type="match status" value="1"/>
</dbReference>
<dbReference type="Pfam" id="PF00669">
    <property type="entry name" value="Flagellin_N"/>
    <property type="match status" value="1"/>
</dbReference>
<dbReference type="PRINTS" id="PR00207">
    <property type="entry name" value="FLAGELLIN"/>
</dbReference>
<dbReference type="SUPFAM" id="SSF64518">
    <property type="entry name" value="Phase 1 flagellin"/>
    <property type="match status" value="1"/>
</dbReference>
<organism>
    <name type="scientific">Vibrio cholerae serotype O1 (strain ATCC 39541 / Classical Ogawa 395 / O395)</name>
    <dbReference type="NCBI Taxonomy" id="345073"/>
    <lineage>
        <taxon>Bacteria</taxon>
        <taxon>Pseudomonadati</taxon>
        <taxon>Pseudomonadota</taxon>
        <taxon>Gammaproteobacteria</taxon>
        <taxon>Vibrionales</taxon>
        <taxon>Vibrionaceae</taxon>
        <taxon>Vibrio</taxon>
    </lineage>
</organism>
<proteinExistence type="inferred from homology"/>
<name>FLAB_VIBC3</name>
<gene>
    <name type="primary">flaB</name>
    <name type="ordered locus">VC0395_A1726</name>
    <name type="ordered locus">VC395_2256</name>
</gene>
<protein>
    <recommendedName>
        <fullName>Flagellin B</fullName>
    </recommendedName>
</protein>
<accession>A5F6C4</accession>
<accession>C3M2X4</accession>
<accession>O34223</accession>
<evidence type="ECO:0000255" key="1"/>
<evidence type="ECO:0000305" key="2"/>